<accession>Q8D9H3</accession>
<evidence type="ECO:0000255" key="1">
    <source>
        <dbReference type="HAMAP-Rule" id="MF_00405"/>
    </source>
</evidence>
<sequence length="172" mass="19033">MQNKRESYTREDLLASSQGELFGPGYPQLPAPNMLMMDRVTKMSETEGDFGKGLILAELDIKPDLWFFDCHFPGDPVMPGCLGLDAMWQLVGFFLGWVGGKGKGRALGVGEVKFTGQILPTAKKVTYEIHMKRVVNRKLVMGLADGRVLVDGKEIYVAKDLKVGLFQDTSAF</sequence>
<comment type="function">
    <text evidence="1">Necessary for the introduction of cis unsaturation into fatty acids. Catalyzes the dehydration of (3R)-3-hydroxydecanoyl-ACP to E-(2)-decenoyl-ACP and then its isomerization to Z-(3)-decenoyl-ACP. Can catalyze the dehydratase reaction for beta-hydroxyacyl-ACPs with saturated chain lengths up to 16:0, being most active on intermediate chain length.</text>
</comment>
<comment type="catalytic activity">
    <reaction evidence="1">
        <text>a (3R)-hydroxyacyl-[ACP] = a (2E)-enoyl-[ACP] + H2O</text>
        <dbReference type="Rhea" id="RHEA:13097"/>
        <dbReference type="Rhea" id="RHEA-COMP:9925"/>
        <dbReference type="Rhea" id="RHEA-COMP:9945"/>
        <dbReference type="ChEBI" id="CHEBI:15377"/>
        <dbReference type="ChEBI" id="CHEBI:78784"/>
        <dbReference type="ChEBI" id="CHEBI:78827"/>
        <dbReference type="EC" id="4.2.1.59"/>
    </reaction>
</comment>
<comment type="catalytic activity">
    <reaction evidence="1">
        <text>(3R)-hydroxydecanoyl-[ACP] = (2E)-decenoyl-[ACP] + H2O</text>
        <dbReference type="Rhea" id="RHEA:41860"/>
        <dbReference type="Rhea" id="RHEA-COMP:9638"/>
        <dbReference type="Rhea" id="RHEA-COMP:9639"/>
        <dbReference type="ChEBI" id="CHEBI:15377"/>
        <dbReference type="ChEBI" id="CHEBI:78466"/>
        <dbReference type="ChEBI" id="CHEBI:78467"/>
    </reaction>
</comment>
<comment type="catalytic activity">
    <reaction evidence="1">
        <text>(2E)-decenoyl-[ACP] = (3Z)-decenoyl-[ACP]</text>
        <dbReference type="Rhea" id="RHEA:23568"/>
        <dbReference type="Rhea" id="RHEA-COMP:9639"/>
        <dbReference type="Rhea" id="RHEA-COMP:9927"/>
        <dbReference type="ChEBI" id="CHEBI:78467"/>
        <dbReference type="ChEBI" id="CHEBI:78798"/>
        <dbReference type="EC" id="5.3.3.14"/>
    </reaction>
</comment>
<comment type="pathway">
    <text evidence="1">Lipid metabolism; fatty acid biosynthesis.</text>
</comment>
<comment type="subunit">
    <text evidence="1">Homodimer.</text>
</comment>
<comment type="subcellular location">
    <subcellularLocation>
        <location evidence="1">Cytoplasm</location>
    </subcellularLocation>
</comment>
<comment type="similarity">
    <text evidence="1">Belongs to the thioester dehydratase family. FabA subfamily.</text>
</comment>
<protein>
    <recommendedName>
        <fullName evidence="1">3-hydroxydecanoyl-[acyl-carrier-protein] dehydratase</fullName>
        <ecNumber evidence="1">4.2.1.59</ecNumber>
    </recommendedName>
    <alternativeName>
        <fullName evidence="1">3-hydroxyacyl-[acyl-carrier-protein] dehydratase FabA</fullName>
    </alternativeName>
    <alternativeName>
        <fullName evidence="1">Beta-hydroxydecanoyl thioester dehydrase</fullName>
    </alternativeName>
    <alternativeName>
        <fullName evidence="1">Trans-2-decenoyl-[acyl-carrier-protein] isomerase</fullName>
        <ecNumber evidence="1">5.3.3.14</ecNumber>
    </alternativeName>
</protein>
<name>FABA_VIBVU</name>
<organism>
    <name type="scientific">Vibrio vulnificus (strain CMCP6)</name>
    <dbReference type="NCBI Taxonomy" id="216895"/>
    <lineage>
        <taxon>Bacteria</taxon>
        <taxon>Pseudomonadati</taxon>
        <taxon>Pseudomonadota</taxon>
        <taxon>Gammaproteobacteria</taxon>
        <taxon>Vibrionales</taxon>
        <taxon>Vibrionaceae</taxon>
        <taxon>Vibrio</taxon>
    </lineage>
</organism>
<proteinExistence type="inferred from homology"/>
<reference key="1">
    <citation type="submission" date="2002-12" db="EMBL/GenBank/DDBJ databases">
        <title>Complete genome sequence of Vibrio vulnificus CMCP6.</title>
        <authorList>
            <person name="Rhee J.H."/>
            <person name="Kim S.Y."/>
            <person name="Chung S.S."/>
            <person name="Kim J.J."/>
            <person name="Moon Y.H."/>
            <person name="Jeong H."/>
            <person name="Choy H.E."/>
        </authorList>
    </citation>
    <scope>NUCLEOTIDE SEQUENCE [LARGE SCALE GENOMIC DNA]</scope>
    <source>
        <strain>CMCP6</strain>
    </source>
</reference>
<keyword id="KW-0963">Cytoplasm</keyword>
<keyword id="KW-0275">Fatty acid biosynthesis</keyword>
<keyword id="KW-0276">Fatty acid metabolism</keyword>
<keyword id="KW-0413">Isomerase</keyword>
<keyword id="KW-0444">Lipid biosynthesis</keyword>
<keyword id="KW-0443">Lipid metabolism</keyword>
<keyword id="KW-0456">Lyase</keyword>
<dbReference type="EC" id="4.2.1.59" evidence="1"/>
<dbReference type="EC" id="5.3.3.14" evidence="1"/>
<dbReference type="EMBL" id="AE016795">
    <property type="protein sequence ID" value="AAO10977.1"/>
    <property type="molecule type" value="Genomic_DNA"/>
</dbReference>
<dbReference type="RefSeq" id="WP_011080474.1">
    <property type="nucleotide sequence ID" value="NC_004459.3"/>
</dbReference>
<dbReference type="SMR" id="Q8D9H3"/>
<dbReference type="GeneID" id="93896873"/>
<dbReference type="KEGG" id="vvu:VV1_2629"/>
<dbReference type="HOGENOM" id="CLU_097925_0_0_6"/>
<dbReference type="UniPathway" id="UPA00094"/>
<dbReference type="Proteomes" id="UP000002275">
    <property type="component" value="Chromosome 1"/>
</dbReference>
<dbReference type="GO" id="GO:0005737">
    <property type="term" value="C:cytoplasm"/>
    <property type="evidence" value="ECO:0007669"/>
    <property type="project" value="UniProtKB-SubCell"/>
</dbReference>
<dbReference type="GO" id="GO:0019171">
    <property type="term" value="F:(3R)-hydroxyacyl-[acyl-carrier-protein] dehydratase activity"/>
    <property type="evidence" value="ECO:0007669"/>
    <property type="project" value="UniProtKB-UniRule"/>
</dbReference>
<dbReference type="GO" id="GO:0034017">
    <property type="term" value="F:trans-2-decenoyl-acyl-carrier-protein isomerase activity"/>
    <property type="evidence" value="ECO:0007669"/>
    <property type="project" value="UniProtKB-UniRule"/>
</dbReference>
<dbReference type="GO" id="GO:0006636">
    <property type="term" value="P:unsaturated fatty acid biosynthetic process"/>
    <property type="evidence" value="ECO:0007669"/>
    <property type="project" value="UniProtKB-UniRule"/>
</dbReference>
<dbReference type="CDD" id="cd01287">
    <property type="entry name" value="FabA"/>
    <property type="match status" value="1"/>
</dbReference>
<dbReference type="FunFam" id="3.10.129.10:FF:000003">
    <property type="entry name" value="3-hydroxydecanoyl-[acyl-carrier-protein] dehydratase"/>
    <property type="match status" value="1"/>
</dbReference>
<dbReference type="Gene3D" id="3.10.129.10">
    <property type="entry name" value="Hotdog Thioesterase"/>
    <property type="match status" value="1"/>
</dbReference>
<dbReference type="HAMAP" id="MF_00405">
    <property type="entry name" value="FabA"/>
    <property type="match status" value="1"/>
</dbReference>
<dbReference type="InterPro" id="IPR010083">
    <property type="entry name" value="FabA"/>
</dbReference>
<dbReference type="InterPro" id="IPR013114">
    <property type="entry name" value="FabA_FabZ"/>
</dbReference>
<dbReference type="InterPro" id="IPR029069">
    <property type="entry name" value="HotDog_dom_sf"/>
</dbReference>
<dbReference type="NCBIfam" id="TIGR01749">
    <property type="entry name" value="fabA"/>
    <property type="match status" value="1"/>
</dbReference>
<dbReference type="NCBIfam" id="NF003509">
    <property type="entry name" value="PRK05174.1"/>
    <property type="match status" value="1"/>
</dbReference>
<dbReference type="PANTHER" id="PTHR30272">
    <property type="entry name" value="3-HYDROXYACYL-[ACYL-CARRIER-PROTEIN] DEHYDRATASE"/>
    <property type="match status" value="1"/>
</dbReference>
<dbReference type="PANTHER" id="PTHR30272:SF8">
    <property type="entry name" value="3-HYDROXYDECANOYL-[ACYL-CARRIER-PROTEIN] DEHYDRATASE"/>
    <property type="match status" value="1"/>
</dbReference>
<dbReference type="Pfam" id="PF07977">
    <property type="entry name" value="FabA"/>
    <property type="match status" value="1"/>
</dbReference>
<dbReference type="SUPFAM" id="SSF54637">
    <property type="entry name" value="Thioesterase/thiol ester dehydrase-isomerase"/>
    <property type="match status" value="1"/>
</dbReference>
<feature type="chain" id="PRO_0000091619" description="3-hydroxydecanoyl-[acyl-carrier-protein] dehydratase">
    <location>
        <begin position="1"/>
        <end position="172"/>
    </location>
</feature>
<feature type="active site" evidence="1">
    <location>
        <position position="71"/>
    </location>
</feature>
<gene>
    <name evidence="1" type="primary">fabA</name>
    <name type="ordered locus">VV1_2629</name>
</gene>